<organism>
    <name type="scientific">Oryctolagus cuniculus</name>
    <name type="common">Rabbit</name>
    <dbReference type="NCBI Taxonomy" id="9986"/>
    <lineage>
        <taxon>Eukaryota</taxon>
        <taxon>Metazoa</taxon>
        <taxon>Chordata</taxon>
        <taxon>Craniata</taxon>
        <taxon>Vertebrata</taxon>
        <taxon>Euteleostomi</taxon>
        <taxon>Mammalia</taxon>
        <taxon>Eutheria</taxon>
        <taxon>Euarchontoglires</taxon>
        <taxon>Glires</taxon>
        <taxon>Lagomorpha</taxon>
        <taxon>Leporidae</taxon>
        <taxon>Oryctolagus</taxon>
    </lineage>
</organism>
<evidence type="ECO:0000250" key="1"/>
<evidence type="ECO:0000250" key="2">
    <source>
        <dbReference type="UniProtKB" id="O35599"/>
    </source>
</evidence>
<evidence type="ECO:0000250" key="3">
    <source>
        <dbReference type="UniProtKB" id="P04001"/>
    </source>
</evidence>
<evidence type="ECO:0000255" key="4"/>
<evidence type="ECO:0000255" key="5">
    <source>
        <dbReference type="PROSITE-ProRule" id="PRU00498"/>
    </source>
</evidence>
<evidence type="ECO:0000255" key="6">
    <source>
        <dbReference type="PROSITE-ProRule" id="PRU00521"/>
    </source>
</evidence>
<evidence type="ECO:0000256" key="7">
    <source>
        <dbReference type="SAM" id="MobiDB-lite"/>
    </source>
</evidence>
<evidence type="ECO:0000305" key="8"/>
<keyword id="KW-0157">Chromophore</keyword>
<keyword id="KW-1015">Disulfide bond</keyword>
<keyword id="KW-0297">G-protein coupled receptor</keyword>
<keyword id="KW-0325">Glycoprotein</keyword>
<keyword id="KW-0472">Membrane</keyword>
<keyword id="KW-0597">Phosphoprotein</keyword>
<keyword id="KW-0600">Photoreceptor protein</keyword>
<keyword id="KW-0675">Receptor</keyword>
<keyword id="KW-1185">Reference proteome</keyword>
<keyword id="KW-0681">Retinal protein</keyword>
<keyword id="KW-0716">Sensory transduction</keyword>
<keyword id="KW-0807">Transducer</keyword>
<keyword id="KW-0812">Transmembrane</keyword>
<keyword id="KW-1133">Transmembrane helix</keyword>
<keyword id="KW-0844">Vision</keyword>
<sequence>MTQPWGPQMLAGGQPPESHEDSTQASIFTYTNSNSTRGPFEGPNFHIAPRWVYHLTSAWMILVVIASVFTNGLVLVATMRFKKLRHPLNWILVNLAVADLAETVIASTISVVNQFYGYFVLGHPLCVVEGYTVSLCGITGLWSLAIISWERWLVVCKPFGNVRFDAKLAIAGIAFSWIWAAVWTAPPIFGWSRYWPYGLKTSCGPDVFSGTSYPGVQSYMMVLMVTCCIIPLSVIVLCYLQVWMAIRTVAKQQKESESTQKAEKEVTRMVVVMVFAYCLCWGPYTFFACFATAHPGYSFHPLVAAIPSYFAKSATIYNPIIYVFMNRQFRNCILQLFGKKVEDSSELSSASRTEASSVSSVSPA</sequence>
<name>OPSG_RABIT</name>
<gene>
    <name type="primary">OPN1MW</name>
    <name type="synonym">GCP</name>
</gene>
<accession>O18910</accession>
<accession>O62769</accession>
<dbReference type="EMBL" id="AF054240">
    <property type="protein sequence ID" value="AAC64919.1"/>
    <property type="molecule type" value="Genomic_DNA"/>
</dbReference>
<dbReference type="EMBL" id="AF054235">
    <property type="protein sequence ID" value="AAC64919.1"/>
    <property type="status" value="JOINED"/>
    <property type="molecule type" value="Genomic_DNA"/>
</dbReference>
<dbReference type="EMBL" id="AF054236">
    <property type="protein sequence ID" value="AAC64919.1"/>
    <property type="status" value="JOINED"/>
    <property type="molecule type" value="Genomic_DNA"/>
</dbReference>
<dbReference type="EMBL" id="AF054237">
    <property type="protein sequence ID" value="AAC64919.1"/>
    <property type="status" value="JOINED"/>
    <property type="molecule type" value="Genomic_DNA"/>
</dbReference>
<dbReference type="EMBL" id="AF054238">
    <property type="protein sequence ID" value="AAC64919.1"/>
    <property type="status" value="JOINED"/>
    <property type="molecule type" value="Genomic_DNA"/>
</dbReference>
<dbReference type="EMBL" id="AF054239">
    <property type="protein sequence ID" value="AAC64919.1"/>
    <property type="status" value="JOINED"/>
    <property type="molecule type" value="Genomic_DNA"/>
</dbReference>
<dbReference type="EMBL" id="AF031526">
    <property type="protein sequence ID" value="AAB86944.1"/>
    <property type="molecule type" value="mRNA"/>
</dbReference>
<dbReference type="RefSeq" id="NP_001309193.1">
    <property type="nucleotide sequence ID" value="NM_001322264.1"/>
</dbReference>
<dbReference type="SMR" id="O18910"/>
<dbReference type="FunCoup" id="O18910">
    <property type="interactions" value="91"/>
</dbReference>
<dbReference type="STRING" id="9986.ENSOCUP00000009859"/>
<dbReference type="GlyCosmos" id="O18910">
    <property type="glycosylation" value="1 site, No reported glycans"/>
</dbReference>
<dbReference type="PaxDb" id="9986-ENSOCUP00000009859"/>
<dbReference type="Ensembl" id="ENSOCUT00000011463.4">
    <property type="protein sequence ID" value="ENSOCUP00000009859.4"/>
    <property type="gene ID" value="ENSOCUG00000011466.4"/>
</dbReference>
<dbReference type="GeneID" id="100008674"/>
<dbReference type="KEGG" id="ocu:100008674"/>
<dbReference type="CTD" id="2652"/>
<dbReference type="eggNOG" id="KOG3656">
    <property type="taxonomic scope" value="Eukaryota"/>
</dbReference>
<dbReference type="GeneTree" id="ENSGT01030000234549"/>
<dbReference type="InParanoid" id="O18910"/>
<dbReference type="OrthoDB" id="8545112at2759"/>
<dbReference type="TreeFam" id="TF324998"/>
<dbReference type="Proteomes" id="UP000001811">
    <property type="component" value="Unplaced"/>
</dbReference>
<dbReference type="Bgee" id="ENSOCUG00000011466">
    <property type="expression patterns" value="Expressed in blood"/>
</dbReference>
<dbReference type="GO" id="GO:0001750">
    <property type="term" value="C:photoreceptor outer segment"/>
    <property type="evidence" value="ECO:0007669"/>
    <property type="project" value="Ensembl"/>
</dbReference>
<dbReference type="GO" id="GO:0005886">
    <property type="term" value="C:plasma membrane"/>
    <property type="evidence" value="ECO:0000250"/>
    <property type="project" value="UniProtKB"/>
</dbReference>
<dbReference type="GO" id="GO:0004930">
    <property type="term" value="F:G protein-coupled receptor activity"/>
    <property type="evidence" value="ECO:0007669"/>
    <property type="project" value="UniProtKB-KW"/>
</dbReference>
<dbReference type="GO" id="GO:0042802">
    <property type="term" value="F:identical protein binding"/>
    <property type="evidence" value="ECO:0000250"/>
    <property type="project" value="UniProtKB"/>
</dbReference>
<dbReference type="GO" id="GO:0009881">
    <property type="term" value="F:photoreceptor activity"/>
    <property type="evidence" value="ECO:0007669"/>
    <property type="project" value="UniProtKB-KW"/>
</dbReference>
<dbReference type="GO" id="GO:0007602">
    <property type="term" value="P:phototransduction"/>
    <property type="evidence" value="ECO:0007669"/>
    <property type="project" value="UniProtKB-KW"/>
</dbReference>
<dbReference type="GO" id="GO:0007601">
    <property type="term" value="P:visual perception"/>
    <property type="evidence" value="ECO:0007669"/>
    <property type="project" value="UniProtKB-KW"/>
</dbReference>
<dbReference type="FunFam" id="1.20.1070.10:FF:000090">
    <property type="entry name" value="Long-wave-sensitive opsin 1"/>
    <property type="match status" value="1"/>
</dbReference>
<dbReference type="Gene3D" id="1.20.1070.10">
    <property type="entry name" value="Rhodopsin 7-helix transmembrane proteins"/>
    <property type="match status" value="1"/>
</dbReference>
<dbReference type="InterPro" id="IPR050125">
    <property type="entry name" value="GPCR_opsins"/>
</dbReference>
<dbReference type="InterPro" id="IPR000276">
    <property type="entry name" value="GPCR_Rhodpsn"/>
</dbReference>
<dbReference type="InterPro" id="IPR017452">
    <property type="entry name" value="GPCR_Rhodpsn_7TM"/>
</dbReference>
<dbReference type="InterPro" id="IPR001760">
    <property type="entry name" value="Opsin"/>
</dbReference>
<dbReference type="InterPro" id="IPR000378">
    <property type="entry name" value="Opsin_red/grn"/>
</dbReference>
<dbReference type="InterPro" id="IPR027430">
    <property type="entry name" value="Retinal_BS"/>
</dbReference>
<dbReference type="PANTHER" id="PTHR24240">
    <property type="entry name" value="OPSIN"/>
    <property type="match status" value="1"/>
</dbReference>
<dbReference type="Pfam" id="PF00001">
    <property type="entry name" value="7tm_1"/>
    <property type="match status" value="1"/>
</dbReference>
<dbReference type="PRINTS" id="PR00237">
    <property type="entry name" value="GPCRRHODOPSN"/>
</dbReference>
<dbReference type="PRINTS" id="PR00238">
    <property type="entry name" value="OPSIN"/>
</dbReference>
<dbReference type="PRINTS" id="PR00575">
    <property type="entry name" value="OPSINREDGRN"/>
</dbReference>
<dbReference type="SMART" id="SM01381">
    <property type="entry name" value="7TM_GPCR_Srsx"/>
    <property type="match status" value="1"/>
</dbReference>
<dbReference type="SUPFAM" id="SSF81321">
    <property type="entry name" value="Family A G protein-coupled receptor-like"/>
    <property type="match status" value="1"/>
</dbReference>
<dbReference type="PROSITE" id="PS00237">
    <property type="entry name" value="G_PROTEIN_RECEP_F1_1"/>
    <property type="match status" value="1"/>
</dbReference>
<dbReference type="PROSITE" id="PS50262">
    <property type="entry name" value="G_PROTEIN_RECEP_F1_2"/>
    <property type="match status" value="1"/>
</dbReference>
<dbReference type="PROSITE" id="PS00238">
    <property type="entry name" value="OPSIN"/>
    <property type="match status" value="1"/>
</dbReference>
<protein>
    <recommendedName>
        <fullName>Medium-wave-sensitive opsin 1</fullName>
    </recommendedName>
    <alternativeName>
        <fullName>Green cone photoreceptor pigment</fullName>
    </alternativeName>
    <alternativeName>
        <fullName>Green-sensitive opsin</fullName>
    </alternativeName>
    <alternativeName>
        <fullName>Medium wavelength-sensitive cone opsin</fullName>
    </alternativeName>
</protein>
<proteinExistence type="evidence at protein level"/>
<feature type="chain" id="PRO_0000197788" description="Medium-wave-sensitive opsin 1">
    <location>
        <begin position="1"/>
        <end position="364"/>
    </location>
</feature>
<feature type="topological domain" description="Extracellular">
    <location>
        <begin position="1"/>
        <end position="52"/>
    </location>
</feature>
<feature type="transmembrane region" description="Helical; Name=1" evidence="4">
    <location>
        <begin position="53"/>
        <end position="77"/>
    </location>
</feature>
<feature type="topological domain" description="Cytoplasmic">
    <location>
        <begin position="78"/>
        <end position="89"/>
    </location>
</feature>
<feature type="transmembrane region" description="Helical; Name=2" evidence="4">
    <location>
        <begin position="90"/>
        <end position="115"/>
    </location>
</feature>
<feature type="topological domain" description="Extracellular">
    <location>
        <begin position="116"/>
        <end position="129"/>
    </location>
</feature>
<feature type="transmembrane region" description="Helical; Name=3" evidence="4">
    <location>
        <begin position="130"/>
        <end position="149"/>
    </location>
</feature>
<feature type="topological domain" description="Cytoplasmic">
    <location>
        <begin position="150"/>
        <end position="168"/>
    </location>
</feature>
<feature type="transmembrane region" description="Helical; Name=4" evidence="4">
    <location>
        <begin position="169"/>
        <end position="192"/>
    </location>
</feature>
<feature type="topological domain" description="Extracellular">
    <location>
        <begin position="193"/>
        <end position="218"/>
    </location>
</feature>
<feature type="transmembrane region" description="Helical; Name=5" evidence="4">
    <location>
        <begin position="219"/>
        <end position="246"/>
    </location>
</feature>
<feature type="topological domain" description="Cytoplasmic">
    <location>
        <begin position="247"/>
        <end position="268"/>
    </location>
</feature>
<feature type="transmembrane region" description="Helical; Name=6" evidence="4">
    <location>
        <begin position="269"/>
        <end position="292"/>
    </location>
</feature>
<feature type="topological domain" description="Extracellular">
    <location>
        <begin position="293"/>
        <end position="300"/>
    </location>
</feature>
<feature type="transmembrane region" description="Helical; Name=7" evidence="4">
    <location>
        <begin position="301"/>
        <end position="325"/>
    </location>
</feature>
<feature type="topological domain" description="Cytoplasmic">
    <location>
        <begin position="326"/>
        <end position="364"/>
    </location>
</feature>
<feature type="region of interest" description="Disordered" evidence="7">
    <location>
        <begin position="1"/>
        <end position="23"/>
    </location>
</feature>
<feature type="region of interest" description="Required for 11-cis-retinal regeneration" evidence="3">
    <location>
        <begin position="17"/>
        <end position="43"/>
    </location>
</feature>
<feature type="modified residue" description="N6-(retinylidene)lysine" evidence="1">
    <location>
        <position position="312"/>
    </location>
</feature>
<feature type="glycosylation site" description="N-linked (GlcNAc...) asparagine" evidence="5">
    <location>
        <position position="34"/>
    </location>
</feature>
<feature type="disulfide bond" evidence="6">
    <location>
        <begin position="126"/>
        <end position="203"/>
    </location>
</feature>
<feature type="sequence conflict" description="In Ref. 2; AAB86944." evidence="8" ref="2">
    <original>RT</original>
    <variation>PA</variation>
    <location>
        <begin position="247"/>
        <end position="248"/>
    </location>
</feature>
<comment type="function">
    <text>Visual pigments are the light-absorbing molecules that mediate vision. They consist of an apoprotein, opsin, covalently linked to cis-retinal. May increase spectral sensitivity in dim light.</text>
</comment>
<comment type="biophysicochemical properties">
    <absorption>
        <max>509 nm</max>
    </absorption>
</comment>
<comment type="subunit">
    <text evidence="3">Monomer. Homodimer. Homotetramer.</text>
</comment>
<comment type="subcellular location">
    <subcellularLocation>
        <location>Membrane</location>
        <topology>Multi-pass membrane protein</topology>
    </subcellularLocation>
</comment>
<comment type="tissue specificity">
    <text>Expressed in cone photoreceptor cells.</text>
</comment>
<comment type="PTM">
    <text evidence="2">O-glycosylated.</text>
</comment>
<comment type="PTM">
    <text>Phosphorylated on some or all of the serine and threonine residues present in the C-terminal region.</text>
</comment>
<comment type="similarity">
    <text evidence="6">Belongs to the G-protein coupled receptor 1 family. Opsin subfamily.</text>
</comment>
<reference key="1">
    <citation type="journal article" date="1998" name="Gene">
        <title>Genetic analyses of the green visual pigments of rabbit (Oryctolagus cuniculus) and rat (Rattus norvegicus).</title>
        <authorList>
            <person name="Radlwimmer F.B."/>
            <person name="Yokoyama S."/>
        </authorList>
    </citation>
    <scope>NUCLEOTIDE SEQUENCE [GENOMIC DNA]</scope>
</reference>
<reference key="2">
    <citation type="journal article" date="1998" name="Mol. Biol. Evol.">
        <title>The 'five-sites' rule and the evolution of red and green color vision in mammals.</title>
        <authorList>
            <person name="Yokoyama S."/>
            <person name="Radlwimmer F.B."/>
        </authorList>
    </citation>
    <scope>NUCLEOTIDE SEQUENCE [MRNA] OF 48-320</scope>
</reference>